<comment type="function">
    <text evidence="1 2">Membrane-associated protein that warps the membrane surface to access and bind aromatic isoprenes with high specificity, including ubiquinone (CoQ) isoprene intermediates and presents them directly to Coq7, therefore facilitating the Coq7-mediated hydroxylase step. Participates in the biosynthesis of coenzyme Q, also named ubiquinone, an essential lipid-soluble electron transporter for aerobic cellular respiration.</text>
</comment>
<comment type="pathway">
    <text evidence="1">Cofactor biosynthesis; ubiquinone biosynthesis.</text>
</comment>
<comment type="subcellular location">
    <subcellularLocation>
        <location evidence="3">Mitochondrion</location>
    </subcellularLocation>
</comment>
<comment type="similarity">
    <text evidence="6">Belongs to the COQ9 family.</text>
</comment>
<sequence>MANVRCLYKLIRLQKLLLPLNATSSRLAPLQPRPLTFLIARSYGKDEKKANLEDFRAREEQRERERDAADQAAEKASQKEAGGGGGLGAKGSESTGPEDDAKQAKVDAIRAKILDAALQHVPQQGWTRQAIILGAEESGYPSVVHGMFPEGGFALVSHFNGKCNAQLVESLQQKTDGGKQEVEDPLDFLVQAVRQRLEMVTPYKTHWPQAMALLAQPQHAPTALAQVLTLVDDICYYSGDRSVDFGWYTRRVGLATIMKMTELYFLQDKSPGHAQTWEFLKSRMDEAVQLQMMLSQTEGMTHTFQRSFNSAFITARNILGLGYNRN</sequence>
<protein>
    <recommendedName>
        <fullName>Ubiquinone biosynthesis protein COQ9, mitochondrial</fullName>
    </recommendedName>
</protein>
<name>COQ9_DROME</name>
<reference key="1">
    <citation type="journal article" date="2000" name="Science">
        <title>The genome sequence of Drosophila melanogaster.</title>
        <authorList>
            <person name="Adams M.D."/>
            <person name="Celniker S.E."/>
            <person name="Holt R.A."/>
            <person name="Evans C.A."/>
            <person name="Gocayne J.D."/>
            <person name="Amanatides P.G."/>
            <person name="Scherer S.E."/>
            <person name="Li P.W."/>
            <person name="Hoskins R.A."/>
            <person name="Galle R.F."/>
            <person name="George R.A."/>
            <person name="Lewis S.E."/>
            <person name="Richards S."/>
            <person name="Ashburner M."/>
            <person name="Henderson S.N."/>
            <person name="Sutton G.G."/>
            <person name="Wortman J.R."/>
            <person name="Yandell M.D."/>
            <person name="Zhang Q."/>
            <person name="Chen L.X."/>
            <person name="Brandon R.C."/>
            <person name="Rogers Y.-H.C."/>
            <person name="Blazej R.G."/>
            <person name="Champe M."/>
            <person name="Pfeiffer B.D."/>
            <person name="Wan K.H."/>
            <person name="Doyle C."/>
            <person name="Baxter E.G."/>
            <person name="Helt G."/>
            <person name="Nelson C.R."/>
            <person name="Miklos G.L.G."/>
            <person name="Abril J.F."/>
            <person name="Agbayani A."/>
            <person name="An H.-J."/>
            <person name="Andrews-Pfannkoch C."/>
            <person name="Baldwin D."/>
            <person name="Ballew R.M."/>
            <person name="Basu A."/>
            <person name="Baxendale J."/>
            <person name="Bayraktaroglu L."/>
            <person name="Beasley E.M."/>
            <person name="Beeson K.Y."/>
            <person name="Benos P.V."/>
            <person name="Berman B.P."/>
            <person name="Bhandari D."/>
            <person name="Bolshakov S."/>
            <person name="Borkova D."/>
            <person name="Botchan M.R."/>
            <person name="Bouck J."/>
            <person name="Brokstein P."/>
            <person name="Brottier P."/>
            <person name="Burtis K.C."/>
            <person name="Busam D.A."/>
            <person name="Butler H."/>
            <person name="Cadieu E."/>
            <person name="Center A."/>
            <person name="Chandra I."/>
            <person name="Cherry J.M."/>
            <person name="Cawley S."/>
            <person name="Dahlke C."/>
            <person name="Davenport L.B."/>
            <person name="Davies P."/>
            <person name="de Pablos B."/>
            <person name="Delcher A."/>
            <person name="Deng Z."/>
            <person name="Mays A.D."/>
            <person name="Dew I."/>
            <person name="Dietz S.M."/>
            <person name="Dodson K."/>
            <person name="Doup L.E."/>
            <person name="Downes M."/>
            <person name="Dugan-Rocha S."/>
            <person name="Dunkov B.C."/>
            <person name="Dunn P."/>
            <person name="Durbin K.J."/>
            <person name="Evangelista C.C."/>
            <person name="Ferraz C."/>
            <person name="Ferriera S."/>
            <person name="Fleischmann W."/>
            <person name="Fosler C."/>
            <person name="Gabrielian A.E."/>
            <person name="Garg N.S."/>
            <person name="Gelbart W.M."/>
            <person name="Glasser K."/>
            <person name="Glodek A."/>
            <person name="Gong F."/>
            <person name="Gorrell J.H."/>
            <person name="Gu Z."/>
            <person name="Guan P."/>
            <person name="Harris M."/>
            <person name="Harris N.L."/>
            <person name="Harvey D.A."/>
            <person name="Heiman T.J."/>
            <person name="Hernandez J.R."/>
            <person name="Houck J."/>
            <person name="Hostin D."/>
            <person name="Houston K.A."/>
            <person name="Howland T.J."/>
            <person name="Wei M.-H."/>
            <person name="Ibegwam C."/>
            <person name="Jalali M."/>
            <person name="Kalush F."/>
            <person name="Karpen G.H."/>
            <person name="Ke Z."/>
            <person name="Kennison J.A."/>
            <person name="Ketchum K.A."/>
            <person name="Kimmel B.E."/>
            <person name="Kodira C.D."/>
            <person name="Kraft C.L."/>
            <person name="Kravitz S."/>
            <person name="Kulp D."/>
            <person name="Lai Z."/>
            <person name="Lasko P."/>
            <person name="Lei Y."/>
            <person name="Levitsky A.A."/>
            <person name="Li J.H."/>
            <person name="Li Z."/>
            <person name="Liang Y."/>
            <person name="Lin X."/>
            <person name="Liu X."/>
            <person name="Mattei B."/>
            <person name="McIntosh T.C."/>
            <person name="McLeod M.P."/>
            <person name="McPherson D."/>
            <person name="Merkulov G."/>
            <person name="Milshina N.V."/>
            <person name="Mobarry C."/>
            <person name="Morris J."/>
            <person name="Moshrefi A."/>
            <person name="Mount S.M."/>
            <person name="Moy M."/>
            <person name="Murphy B."/>
            <person name="Murphy L."/>
            <person name="Muzny D.M."/>
            <person name="Nelson D.L."/>
            <person name="Nelson D.R."/>
            <person name="Nelson K.A."/>
            <person name="Nixon K."/>
            <person name="Nusskern D.R."/>
            <person name="Pacleb J.M."/>
            <person name="Palazzolo M."/>
            <person name="Pittman G.S."/>
            <person name="Pan S."/>
            <person name="Pollard J."/>
            <person name="Puri V."/>
            <person name="Reese M.G."/>
            <person name="Reinert K."/>
            <person name="Remington K."/>
            <person name="Saunders R.D.C."/>
            <person name="Scheeler F."/>
            <person name="Shen H."/>
            <person name="Shue B.C."/>
            <person name="Siden-Kiamos I."/>
            <person name="Simpson M."/>
            <person name="Skupski M.P."/>
            <person name="Smith T.J."/>
            <person name="Spier E."/>
            <person name="Spradling A.C."/>
            <person name="Stapleton M."/>
            <person name="Strong R."/>
            <person name="Sun E."/>
            <person name="Svirskas R."/>
            <person name="Tector C."/>
            <person name="Turner R."/>
            <person name="Venter E."/>
            <person name="Wang A.H."/>
            <person name="Wang X."/>
            <person name="Wang Z.-Y."/>
            <person name="Wassarman D.A."/>
            <person name="Weinstock G.M."/>
            <person name="Weissenbach J."/>
            <person name="Williams S.M."/>
            <person name="Woodage T."/>
            <person name="Worley K.C."/>
            <person name="Wu D."/>
            <person name="Yang S."/>
            <person name="Yao Q.A."/>
            <person name="Ye J."/>
            <person name="Yeh R.-F."/>
            <person name="Zaveri J.S."/>
            <person name="Zhan M."/>
            <person name="Zhang G."/>
            <person name="Zhao Q."/>
            <person name="Zheng L."/>
            <person name="Zheng X.H."/>
            <person name="Zhong F.N."/>
            <person name="Zhong W."/>
            <person name="Zhou X."/>
            <person name="Zhu S.C."/>
            <person name="Zhu X."/>
            <person name="Smith H.O."/>
            <person name="Gibbs R.A."/>
            <person name="Myers E.W."/>
            <person name="Rubin G.M."/>
            <person name="Venter J.C."/>
        </authorList>
    </citation>
    <scope>NUCLEOTIDE SEQUENCE [LARGE SCALE GENOMIC DNA]</scope>
    <source>
        <strain>Berkeley</strain>
    </source>
</reference>
<reference key="2">
    <citation type="journal article" date="2002" name="Genome Biol.">
        <title>Annotation of the Drosophila melanogaster euchromatic genome: a systematic review.</title>
        <authorList>
            <person name="Misra S."/>
            <person name="Crosby M.A."/>
            <person name="Mungall C.J."/>
            <person name="Matthews B.B."/>
            <person name="Campbell K.S."/>
            <person name="Hradecky P."/>
            <person name="Huang Y."/>
            <person name="Kaminker J.S."/>
            <person name="Millburn G.H."/>
            <person name="Prochnik S.E."/>
            <person name="Smith C.D."/>
            <person name="Tupy J.L."/>
            <person name="Whitfield E.J."/>
            <person name="Bayraktaroglu L."/>
            <person name="Berman B.P."/>
            <person name="Bettencourt B.R."/>
            <person name="Celniker S.E."/>
            <person name="de Grey A.D.N.J."/>
            <person name="Drysdale R.A."/>
            <person name="Harris N.L."/>
            <person name="Richter J."/>
            <person name="Russo S."/>
            <person name="Schroeder A.J."/>
            <person name="Shu S.Q."/>
            <person name="Stapleton M."/>
            <person name="Yamada C."/>
            <person name="Ashburner M."/>
            <person name="Gelbart W.M."/>
            <person name="Rubin G.M."/>
            <person name="Lewis S.E."/>
        </authorList>
    </citation>
    <scope>GENOME REANNOTATION</scope>
    <source>
        <strain>Berkeley</strain>
    </source>
</reference>
<reference key="3">
    <citation type="journal article" date="2002" name="Genome Biol.">
        <title>A Drosophila full-length cDNA resource.</title>
        <authorList>
            <person name="Stapleton M."/>
            <person name="Carlson J.W."/>
            <person name="Brokstein P."/>
            <person name="Yu C."/>
            <person name="Champe M."/>
            <person name="George R.A."/>
            <person name="Guarin H."/>
            <person name="Kronmiller B."/>
            <person name="Pacleb J.M."/>
            <person name="Park S."/>
            <person name="Wan K.H."/>
            <person name="Rubin G.M."/>
            <person name="Celniker S.E."/>
        </authorList>
    </citation>
    <scope>NUCLEOTIDE SEQUENCE [LARGE SCALE MRNA]</scope>
    <source>
        <strain>Berkeley</strain>
        <tissue>Embryo</tissue>
    </source>
</reference>
<evidence type="ECO:0000250" key="1">
    <source>
        <dbReference type="UniProtKB" id="O75208"/>
    </source>
</evidence>
<evidence type="ECO:0000250" key="2">
    <source>
        <dbReference type="UniProtKB" id="Q05779"/>
    </source>
</evidence>
<evidence type="ECO:0000250" key="3">
    <source>
        <dbReference type="UniProtKB" id="Q8K1Z0"/>
    </source>
</evidence>
<evidence type="ECO:0000255" key="4"/>
<evidence type="ECO:0000256" key="5">
    <source>
        <dbReference type="SAM" id="MobiDB-lite"/>
    </source>
</evidence>
<evidence type="ECO:0000305" key="6"/>
<feature type="transit peptide" description="Mitochondrion" evidence="4">
    <location>
        <begin position="1"/>
        <end position="43"/>
    </location>
</feature>
<feature type="chain" id="PRO_0000228643" description="Ubiquinone biosynthesis protein COQ9, mitochondrial">
    <location>
        <begin position="44"/>
        <end position="326"/>
    </location>
</feature>
<feature type="region of interest" description="Disordered" evidence="5">
    <location>
        <begin position="49"/>
        <end position="103"/>
    </location>
</feature>
<feature type="compositionally biased region" description="Basic and acidic residues" evidence="5">
    <location>
        <begin position="49"/>
        <end position="78"/>
    </location>
</feature>
<feature type="binding site" evidence="1">
    <location>
        <begin position="248"/>
        <end position="251"/>
    </location>
    <ligand>
        <name>a 1,2-diacylglycero-3-phosphoethanolamine</name>
        <dbReference type="ChEBI" id="CHEBI:57613"/>
    </ligand>
</feature>
<feature type="sequence conflict" description="In Ref. 3; AAL68377." evidence="6" ref="3">
    <original>R</original>
    <variation>C</variation>
    <location>
        <position position="194"/>
    </location>
</feature>
<accession>Q8MKN0</accession>
<accession>Q8T8R0</accession>
<gene>
    <name type="primary">Coq9</name>
    <name type="ORF">CG30493</name>
</gene>
<proteinExistence type="evidence at transcript level"/>
<dbReference type="EMBL" id="AE013599">
    <property type="protein sequence ID" value="AAM71104.1"/>
    <property type="molecule type" value="Genomic_DNA"/>
</dbReference>
<dbReference type="EMBL" id="AY075570">
    <property type="protein sequence ID" value="AAL68377.1"/>
    <property type="molecule type" value="mRNA"/>
</dbReference>
<dbReference type="RefSeq" id="NP_724594.1">
    <property type="nucleotide sequence ID" value="NM_165550.3"/>
</dbReference>
<dbReference type="SMR" id="Q8MKN0"/>
<dbReference type="BioGRID" id="73193">
    <property type="interactions" value="1"/>
</dbReference>
<dbReference type="FunCoup" id="Q8MKN0">
    <property type="interactions" value="1363"/>
</dbReference>
<dbReference type="IntAct" id="Q8MKN0">
    <property type="interactions" value="5"/>
</dbReference>
<dbReference type="STRING" id="7227.FBpp0087999"/>
<dbReference type="PaxDb" id="7227-FBpp0087999"/>
<dbReference type="DNASU" id="246650"/>
<dbReference type="EnsemblMetazoa" id="FBtr0088925">
    <property type="protein sequence ID" value="FBpp0087999"/>
    <property type="gene ID" value="FBgn0050493"/>
</dbReference>
<dbReference type="GeneID" id="246650"/>
<dbReference type="KEGG" id="dme:Dmel_CG30493"/>
<dbReference type="UCSC" id="CG30493-RB">
    <property type="organism name" value="d. melanogaster"/>
</dbReference>
<dbReference type="AGR" id="FB:FBgn0050493"/>
<dbReference type="CTD" id="57017"/>
<dbReference type="FlyBase" id="FBgn0050493">
    <property type="gene designation" value="Coq9"/>
</dbReference>
<dbReference type="VEuPathDB" id="VectorBase:FBgn0050493"/>
<dbReference type="eggNOG" id="KOG2969">
    <property type="taxonomic scope" value="Eukaryota"/>
</dbReference>
<dbReference type="GeneTree" id="ENSGT00390000009328"/>
<dbReference type="HOGENOM" id="CLU_057411_0_0_1"/>
<dbReference type="InParanoid" id="Q8MKN0"/>
<dbReference type="OMA" id="IELIIYW"/>
<dbReference type="OrthoDB" id="619536at2759"/>
<dbReference type="PhylomeDB" id="Q8MKN0"/>
<dbReference type="Reactome" id="R-DME-2142789">
    <property type="pathway name" value="Ubiquinol biosynthesis"/>
</dbReference>
<dbReference type="UniPathway" id="UPA00232"/>
<dbReference type="BioGRID-ORCS" id="246650">
    <property type="hits" value="0 hits in 1 CRISPR screen"/>
</dbReference>
<dbReference type="GenomeRNAi" id="246650"/>
<dbReference type="PRO" id="PR:Q8MKN0"/>
<dbReference type="Proteomes" id="UP000000803">
    <property type="component" value="Chromosome 2R"/>
</dbReference>
<dbReference type="Bgee" id="FBgn0050493">
    <property type="expression patterns" value="Expressed in enteroblast (Drosophila) in digestive tract and 69 other cell types or tissues"/>
</dbReference>
<dbReference type="ExpressionAtlas" id="Q8MKN0">
    <property type="expression patterns" value="baseline and differential"/>
</dbReference>
<dbReference type="GO" id="GO:0005743">
    <property type="term" value="C:mitochondrial inner membrane"/>
    <property type="evidence" value="ECO:0000250"/>
    <property type="project" value="UniProtKB"/>
</dbReference>
<dbReference type="GO" id="GO:0110142">
    <property type="term" value="C:ubiquinone biosynthesis complex"/>
    <property type="evidence" value="ECO:0000250"/>
    <property type="project" value="FlyBase"/>
</dbReference>
<dbReference type="GO" id="GO:0008289">
    <property type="term" value="F:lipid binding"/>
    <property type="evidence" value="ECO:0000318"/>
    <property type="project" value="GO_Central"/>
</dbReference>
<dbReference type="GO" id="GO:0006744">
    <property type="term" value="P:ubiquinone biosynthetic process"/>
    <property type="evidence" value="ECO:0000315"/>
    <property type="project" value="FlyBase"/>
</dbReference>
<dbReference type="FunFam" id="1.10.357.10:FF:000004">
    <property type="entry name" value="Ubiquinone biosynthesis protein COQ9, mitochondrial"/>
    <property type="match status" value="1"/>
</dbReference>
<dbReference type="Gene3D" id="1.10.357.10">
    <property type="entry name" value="Tetracycline Repressor, domain 2"/>
    <property type="match status" value="1"/>
</dbReference>
<dbReference type="InterPro" id="IPR013718">
    <property type="entry name" value="COQ9_C"/>
</dbReference>
<dbReference type="InterPro" id="IPR048674">
    <property type="entry name" value="COQ9_HTH"/>
</dbReference>
<dbReference type="InterPro" id="IPR012762">
    <property type="entry name" value="Ubiq_biosynth_COQ9"/>
</dbReference>
<dbReference type="NCBIfam" id="TIGR02396">
    <property type="entry name" value="diverge_rpsU"/>
    <property type="match status" value="1"/>
</dbReference>
<dbReference type="PANTHER" id="PTHR21427">
    <property type="entry name" value="UBIQUINONE BIOSYNTHESIS PROTEIN COQ9, MITOCHONDRIAL"/>
    <property type="match status" value="1"/>
</dbReference>
<dbReference type="PANTHER" id="PTHR21427:SF19">
    <property type="entry name" value="UBIQUINONE BIOSYNTHESIS PROTEIN COQ9, MITOCHONDRIAL"/>
    <property type="match status" value="1"/>
</dbReference>
<dbReference type="Pfam" id="PF08511">
    <property type="entry name" value="COQ9"/>
    <property type="match status" value="1"/>
</dbReference>
<dbReference type="Pfam" id="PF21392">
    <property type="entry name" value="COQ9_N"/>
    <property type="match status" value="1"/>
</dbReference>
<keyword id="KW-0446">Lipid-binding</keyword>
<keyword id="KW-0496">Mitochondrion</keyword>
<keyword id="KW-1185">Reference proteome</keyword>
<keyword id="KW-0809">Transit peptide</keyword>
<keyword id="KW-0831">Ubiquinone biosynthesis</keyword>
<organism>
    <name type="scientific">Drosophila melanogaster</name>
    <name type="common">Fruit fly</name>
    <dbReference type="NCBI Taxonomy" id="7227"/>
    <lineage>
        <taxon>Eukaryota</taxon>
        <taxon>Metazoa</taxon>
        <taxon>Ecdysozoa</taxon>
        <taxon>Arthropoda</taxon>
        <taxon>Hexapoda</taxon>
        <taxon>Insecta</taxon>
        <taxon>Pterygota</taxon>
        <taxon>Neoptera</taxon>
        <taxon>Endopterygota</taxon>
        <taxon>Diptera</taxon>
        <taxon>Brachycera</taxon>
        <taxon>Muscomorpha</taxon>
        <taxon>Ephydroidea</taxon>
        <taxon>Drosophilidae</taxon>
        <taxon>Drosophila</taxon>
        <taxon>Sophophora</taxon>
    </lineage>
</organism>